<feature type="chain" id="PRO_0000248313" description="Endoplasmic reticulum junction formation protein lunapark-A">
    <location>
        <begin position="1"/>
        <end position="393"/>
    </location>
</feature>
<feature type="topological domain" description="Cytoplasmic" evidence="3">
    <location>
        <begin position="1"/>
        <end position="45"/>
    </location>
</feature>
<feature type="transmembrane region" description="Helical" evidence="4">
    <location>
        <begin position="46"/>
        <end position="66"/>
    </location>
</feature>
<feature type="topological domain" description="Lumenal" evidence="3">
    <location>
        <begin position="67"/>
        <end position="69"/>
    </location>
</feature>
<feature type="transmembrane region" description="Helical" evidence="4">
    <location>
        <begin position="70"/>
        <end position="90"/>
    </location>
</feature>
<feature type="topological domain" description="Cytoplasmic" evidence="3">
    <location>
        <begin position="91"/>
        <end position="393"/>
    </location>
</feature>
<feature type="zinc finger region" description="C4-type; plays a role in ER morphology" evidence="3">
    <location>
        <begin position="269"/>
        <end position="294"/>
    </location>
</feature>
<feature type="region of interest" description="Disordered" evidence="5">
    <location>
        <begin position="146"/>
        <end position="209"/>
    </location>
</feature>
<feature type="region of interest" description="Disordered" evidence="5">
    <location>
        <begin position="314"/>
        <end position="393"/>
    </location>
</feature>
<feature type="coiled-coil region" evidence="4">
    <location>
        <begin position="95"/>
        <end position="130"/>
    </location>
</feature>
<feature type="compositionally biased region" description="Pro residues" evidence="5">
    <location>
        <begin position="176"/>
        <end position="190"/>
    </location>
</feature>
<feature type="compositionally biased region" description="Basic and acidic residues" evidence="5">
    <location>
        <begin position="340"/>
        <end position="353"/>
    </location>
</feature>
<feature type="compositionally biased region" description="Basic and acidic residues" evidence="5">
    <location>
        <begin position="364"/>
        <end position="383"/>
    </location>
</feature>
<feature type="sequence conflict" description="In Ref. 1; AAQ98004." evidence="6" ref="1">
    <original>I</original>
    <variation>V</variation>
    <location>
        <position position="96"/>
    </location>
</feature>
<feature type="sequence conflict" description="In Ref. 1; AAQ98004." evidence="6" ref="1">
    <original>V</original>
    <variation>A</variation>
    <location>
        <position position="158"/>
    </location>
</feature>
<feature type="sequence conflict" description="In Ref. 1; AAQ98004." evidence="6" ref="1">
    <original>G</original>
    <variation>E</variation>
    <location>
        <position position="352"/>
    </location>
</feature>
<accession>Q7ZU80</accession>
<accession>Q6TEM1</accession>
<evidence type="ECO:0000250" key="1">
    <source>
        <dbReference type="UniProtKB" id="Q6DFJ8"/>
    </source>
</evidence>
<evidence type="ECO:0000250" key="2">
    <source>
        <dbReference type="UniProtKB" id="Q7TQ95"/>
    </source>
</evidence>
<evidence type="ECO:0000250" key="3">
    <source>
        <dbReference type="UniProtKB" id="Q9C0E8"/>
    </source>
</evidence>
<evidence type="ECO:0000255" key="4"/>
<evidence type="ECO:0000256" key="5">
    <source>
        <dbReference type="SAM" id="MobiDB-lite"/>
    </source>
</evidence>
<evidence type="ECO:0000305" key="6"/>
<proteinExistence type="evidence at transcript level"/>
<comment type="function">
    <text evidence="2 3">Endoplasmic reticulum (ER)-shaping membrane protein that plays a role in determining ER morphology. Involved in the stabilization of nascent three-way ER tubular junctions within the ER network. May also play a role as a curvature-stabilizing protein within three-way ER tubular junction network (By similarity).</text>
</comment>
<comment type="subunit">
    <text evidence="1">Homodimer; homodimerization requires the C4-type zinc finger motif and decreases during mitosis in a phosphorylation-dependent manner.</text>
</comment>
<comment type="subcellular location">
    <subcellularLocation>
        <location evidence="3">Endoplasmic reticulum membrane</location>
        <topology evidence="3">Multi-pass membrane protein</topology>
        <orientation evidence="3">Cytoplasmic side</orientation>
    </subcellularLocation>
    <text evidence="3">Localizes at endoplasmic reticulum (ER) three-way tubular junctions, which represent crossing-points at which the tubules build a polygonal network.</text>
</comment>
<comment type="domain">
    <text evidence="3">The transmembrane domain 1 and 2 function as a signal-anchor and stop-transfer sequence, respectively, generating a double-spanning integral membrane protein with a N- and C-terminal cytoplasmic orientation. Transmembrane domain 1 and 2 are probably sufficient to mediate membrane translocation and topology formation in a N-myristoylation-independent manner. Transmembrane domain 2 is sufficient to block the protein secretion pathway. The two coiled-coil domains are necessary for its endoplasmic reticulum (ER) three-way tubular junction localization. The C4-type zinc finger motif is necessary both for its ER three-way tubular junction localization and formation.</text>
</comment>
<comment type="PTM">
    <text evidence="1">Phosphorylated. Phosphorylation occurs during interphase. Phosphorylation also occurs during mitosis; these phosphorylations reduce both its homodimerization and the ER three-way tubular junction formation.</text>
</comment>
<comment type="similarity">
    <text evidence="6">Belongs to the lunapark family.</text>
</comment>
<name>LNPA_DANRE</name>
<dbReference type="EMBL" id="AY423028">
    <property type="protein sequence ID" value="AAQ98004.1"/>
    <property type="molecule type" value="mRNA"/>
</dbReference>
<dbReference type="EMBL" id="BC050510">
    <property type="protein sequence ID" value="AAH50510.1"/>
    <property type="molecule type" value="mRNA"/>
</dbReference>
<dbReference type="RefSeq" id="NP_955774.1">
    <property type="nucleotide sequence ID" value="NM_199480.1"/>
</dbReference>
<dbReference type="FunCoup" id="Q7ZU80">
    <property type="interactions" value="761"/>
</dbReference>
<dbReference type="STRING" id="7955.ENSDARP00000139167"/>
<dbReference type="GeneID" id="326761"/>
<dbReference type="KEGG" id="dre:326761"/>
<dbReference type="AGR" id="ZFIN:ZDB-GENE-030131-4960"/>
<dbReference type="CTD" id="326761"/>
<dbReference type="ZFIN" id="ZDB-GENE-030131-4960">
    <property type="gene designation" value="lnpa"/>
</dbReference>
<dbReference type="eggNOG" id="KOG2846">
    <property type="taxonomic scope" value="Eukaryota"/>
</dbReference>
<dbReference type="InParanoid" id="Q7ZU80"/>
<dbReference type="OrthoDB" id="1725934at2759"/>
<dbReference type="PhylomeDB" id="Q7ZU80"/>
<dbReference type="PRO" id="PR:Q7ZU80"/>
<dbReference type="Proteomes" id="UP000000437">
    <property type="component" value="Chromosome 9"/>
</dbReference>
<dbReference type="GO" id="GO:0005789">
    <property type="term" value="C:endoplasmic reticulum membrane"/>
    <property type="evidence" value="ECO:0000250"/>
    <property type="project" value="UniProtKB"/>
</dbReference>
<dbReference type="GO" id="GO:0071782">
    <property type="term" value="C:endoplasmic reticulum tubular network"/>
    <property type="evidence" value="ECO:0000318"/>
    <property type="project" value="GO_Central"/>
</dbReference>
<dbReference type="GO" id="GO:0098826">
    <property type="term" value="C:endoplasmic reticulum tubular network membrane"/>
    <property type="evidence" value="ECO:0000250"/>
    <property type="project" value="UniProtKB"/>
</dbReference>
<dbReference type="GO" id="GO:0042802">
    <property type="term" value="F:identical protein binding"/>
    <property type="evidence" value="ECO:0000250"/>
    <property type="project" value="UniProtKB"/>
</dbReference>
<dbReference type="GO" id="GO:0008270">
    <property type="term" value="F:zinc ion binding"/>
    <property type="evidence" value="ECO:0007669"/>
    <property type="project" value="UniProtKB-KW"/>
</dbReference>
<dbReference type="GO" id="GO:0071788">
    <property type="term" value="P:endoplasmic reticulum tubular network maintenance"/>
    <property type="evidence" value="ECO:0000250"/>
    <property type="project" value="UniProtKB"/>
</dbReference>
<dbReference type="GO" id="GO:0071786">
    <property type="term" value="P:endoplasmic reticulum tubular network organization"/>
    <property type="evidence" value="ECO:0000318"/>
    <property type="project" value="GO_Central"/>
</dbReference>
<dbReference type="GO" id="GO:1903373">
    <property type="term" value="P:positive regulation of endoplasmic reticulum tubular network organization"/>
    <property type="evidence" value="ECO:0000250"/>
    <property type="project" value="UniProtKB"/>
</dbReference>
<dbReference type="InterPro" id="IPR040115">
    <property type="entry name" value="Lnp"/>
</dbReference>
<dbReference type="InterPro" id="IPR019273">
    <property type="entry name" value="Lunapark_Znf"/>
</dbReference>
<dbReference type="PANTHER" id="PTHR22166">
    <property type="entry name" value="ENDOPLASMIC RETICULUM JUNCTION FORMATION PROTEIN LUNAPARK"/>
    <property type="match status" value="1"/>
</dbReference>
<dbReference type="PANTHER" id="PTHR22166:SF13">
    <property type="entry name" value="ENDOPLASMIC RETICULUM JUNCTION FORMATION PROTEIN LUNAPARK-A"/>
    <property type="match status" value="1"/>
</dbReference>
<dbReference type="Pfam" id="PF10058">
    <property type="entry name" value="Zn_ribbon_10"/>
    <property type="match status" value="1"/>
</dbReference>
<reference key="1">
    <citation type="journal article" date="2004" name="Proc. Natl. Acad. Sci. U.S.A.">
        <title>Hematopoietic gene expression profile in zebrafish kidney marrow.</title>
        <authorList>
            <person name="Song H.-D."/>
            <person name="Sun X.-J."/>
            <person name="Deng M."/>
            <person name="Zhang G.-W."/>
            <person name="Zhou Y."/>
            <person name="Wu X.-Y."/>
            <person name="Sheng Y."/>
            <person name="Chen Y."/>
            <person name="Ruan Z."/>
            <person name="Jiang C.-L."/>
            <person name="Fan H.-Y."/>
            <person name="Zon L.I."/>
            <person name="Kanki J.P."/>
            <person name="Liu T.X."/>
            <person name="Look A.T."/>
            <person name="Chen Z."/>
        </authorList>
    </citation>
    <scope>NUCLEOTIDE SEQUENCE [LARGE SCALE MRNA]</scope>
    <source>
        <tissue>Kidney marrow</tissue>
    </source>
</reference>
<reference key="2">
    <citation type="submission" date="2003-04" db="EMBL/GenBank/DDBJ databases">
        <authorList>
            <consortium name="NIH - Zebrafish Gene Collection (ZGC) project"/>
        </authorList>
    </citation>
    <scope>NUCLEOTIDE SEQUENCE [LARGE SCALE MRNA]</scope>
    <source>
        <strain>SJD</strain>
    </source>
</reference>
<organism>
    <name type="scientific">Danio rerio</name>
    <name type="common">Zebrafish</name>
    <name type="synonym">Brachydanio rerio</name>
    <dbReference type="NCBI Taxonomy" id="7955"/>
    <lineage>
        <taxon>Eukaryota</taxon>
        <taxon>Metazoa</taxon>
        <taxon>Chordata</taxon>
        <taxon>Craniata</taxon>
        <taxon>Vertebrata</taxon>
        <taxon>Euteleostomi</taxon>
        <taxon>Actinopterygii</taxon>
        <taxon>Neopterygii</taxon>
        <taxon>Teleostei</taxon>
        <taxon>Ostariophysi</taxon>
        <taxon>Cypriniformes</taxon>
        <taxon>Danionidae</taxon>
        <taxon>Danioninae</taxon>
        <taxon>Danio</taxon>
    </lineage>
</organism>
<protein>
    <recommendedName>
        <fullName evidence="6">Endoplasmic reticulum junction formation protein lunapark-A</fullName>
    </recommendedName>
    <alternativeName>
        <fullName evidence="3">ER junction formation factor lunapark</fullName>
    </alternativeName>
</protein>
<keyword id="KW-0175">Coiled coil</keyword>
<keyword id="KW-0256">Endoplasmic reticulum</keyword>
<keyword id="KW-0472">Membrane</keyword>
<keyword id="KW-0479">Metal-binding</keyword>
<keyword id="KW-1185">Reference proteome</keyword>
<keyword id="KW-0812">Transmembrane</keyword>
<keyword id="KW-1133">Transmembrane helix</keyword>
<keyword id="KW-0862">Zinc</keyword>
<keyword id="KW-0863">Zinc-finger</keyword>
<gene>
    <name type="primary">lnpka</name>
    <name type="synonym">lnp</name>
    <name type="synonym">lnpa</name>
    <name type="ORF">zgc:56261</name>
</gene>
<sequence>MGAVVSRWRAKPSTVEVLEGLDKDIQVLEEYREKNHKQLKLWVYRLLLYSALLYLMACAVVYAWYIPERMIGKLIVASPFLLFPLLIWLLRKLLIILYNKRTERNNEKLEELKAEKKKILEQVMETETYKNAKLILERFDPDSKKKLELETQPIGPTVTPRQGQELRHRLVSPRPTGRPPPVPVPGPSVPGTPLSAPGGPPEKGLSASTPQALIRRPGTPVGTPIPVMGMHPPGPPLARPVLPRERGAVDRVIEYLVGDGPQNRYALICQQCLSHNGMALKEEFEYIAFRCAYCYFLNPARKTRPQAPRLPEFAAEAKTSQDPPAVAMETDLPVSPPAPESKEAGPEPVKAGDGDPQTDEIPTEEMKPGDPEPHTDIPDKSDGEQDVSAMEVE</sequence>